<organism>
    <name type="scientific">Salmonella newport (strain SL254)</name>
    <dbReference type="NCBI Taxonomy" id="423368"/>
    <lineage>
        <taxon>Bacteria</taxon>
        <taxon>Pseudomonadati</taxon>
        <taxon>Pseudomonadota</taxon>
        <taxon>Gammaproteobacteria</taxon>
        <taxon>Enterobacterales</taxon>
        <taxon>Enterobacteriaceae</taxon>
        <taxon>Salmonella</taxon>
    </lineage>
</organism>
<accession>B4T690</accession>
<feature type="chain" id="PRO_0000366496" description="Ribosomal RNA large subunit methyltransferase G">
    <location>
        <begin position="1"/>
        <end position="378"/>
    </location>
</feature>
<evidence type="ECO:0000255" key="1">
    <source>
        <dbReference type="HAMAP-Rule" id="MF_01859"/>
    </source>
</evidence>
<dbReference type="EC" id="2.1.1.174" evidence="1"/>
<dbReference type="EMBL" id="CP001113">
    <property type="protein sequence ID" value="ACF65535.1"/>
    <property type="molecule type" value="Genomic_DNA"/>
</dbReference>
<dbReference type="RefSeq" id="WP_000019993.1">
    <property type="nucleotide sequence ID" value="NC_011080.1"/>
</dbReference>
<dbReference type="SMR" id="B4T690"/>
<dbReference type="KEGG" id="see:SNSL254_A3481"/>
<dbReference type="HOGENOM" id="CLU_040288_4_0_6"/>
<dbReference type="Proteomes" id="UP000008824">
    <property type="component" value="Chromosome"/>
</dbReference>
<dbReference type="GO" id="GO:0005737">
    <property type="term" value="C:cytoplasm"/>
    <property type="evidence" value="ECO:0007669"/>
    <property type="project" value="UniProtKB-SubCell"/>
</dbReference>
<dbReference type="GO" id="GO:0052916">
    <property type="term" value="F:23S rRNA (guanine(1835)-N(2))-methyltransferase activity"/>
    <property type="evidence" value="ECO:0007669"/>
    <property type="project" value="UniProtKB-EC"/>
</dbReference>
<dbReference type="GO" id="GO:0003676">
    <property type="term" value="F:nucleic acid binding"/>
    <property type="evidence" value="ECO:0007669"/>
    <property type="project" value="InterPro"/>
</dbReference>
<dbReference type="CDD" id="cd02440">
    <property type="entry name" value="AdoMet_MTases"/>
    <property type="match status" value="1"/>
</dbReference>
<dbReference type="FunFam" id="3.40.50.150:FF:000046">
    <property type="entry name" value="Ribosomal RNA large subunit methyltransferase G"/>
    <property type="match status" value="1"/>
</dbReference>
<dbReference type="FunFam" id="3.40.50.150:FF:000047">
    <property type="entry name" value="Ribosomal RNA large subunit methyltransferase G"/>
    <property type="match status" value="1"/>
</dbReference>
<dbReference type="Gene3D" id="3.40.50.150">
    <property type="entry name" value="Vaccinia Virus protein VP39"/>
    <property type="match status" value="2"/>
</dbReference>
<dbReference type="HAMAP" id="MF_01859">
    <property type="entry name" value="23SrRNA_methyltr_G"/>
    <property type="match status" value="1"/>
</dbReference>
<dbReference type="InterPro" id="IPR002052">
    <property type="entry name" value="DNA_methylase_N6_adenine_CS"/>
</dbReference>
<dbReference type="InterPro" id="IPR017237">
    <property type="entry name" value="rRNA_m2G-MeTrfase_RlmG"/>
</dbReference>
<dbReference type="InterPro" id="IPR046977">
    <property type="entry name" value="RsmC/RlmG"/>
</dbReference>
<dbReference type="InterPro" id="IPR029063">
    <property type="entry name" value="SAM-dependent_MTases_sf"/>
</dbReference>
<dbReference type="InterPro" id="IPR007848">
    <property type="entry name" value="Small_mtfrase_dom"/>
</dbReference>
<dbReference type="NCBIfam" id="NF011577">
    <property type="entry name" value="PRK15001.1"/>
    <property type="match status" value="1"/>
</dbReference>
<dbReference type="PANTHER" id="PTHR47816:SF5">
    <property type="entry name" value="RIBOSOMAL RNA LARGE SUBUNIT METHYLTRANSFERASE G"/>
    <property type="match status" value="1"/>
</dbReference>
<dbReference type="PANTHER" id="PTHR47816">
    <property type="entry name" value="RIBOSOMAL RNA SMALL SUBUNIT METHYLTRANSFERASE C"/>
    <property type="match status" value="1"/>
</dbReference>
<dbReference type="Pfam" id="PF05175">
    <property type="entry name" value="MTS"/>
    <property type="match status" value="1"/>
</dbReference>
<dbReference type="PIRSF" id="PIRSF037565">
    <property type="entry name" value="RRNA_m2G_Mtase_RsmD_prd"/>
    <property type="match status" value="1"/>
</dbReference>
<dbReference type="SUPFAM" id="SSF53335">
    <property type="entry name" value="S-adenosyl-L-methionine-dependent methyltransferases"/>
    <property type="match status" value="1"/>
</dbReference>
<comment type="function">
    <text evidence="1">Specifically methylates the guanine in position 1835 (m2G1835) of 23S rRNA.</text>
</comment>
<comment type="catalytic activity">
    <reaction evidence="1">
        <text>guanosine(1835) in 23S rRNA + S-adenosyl-L-methionine = N(2)-methylguanosine(1835) in 23S rRNA + S-adenosyl-L-homocysteine + H(+)</text>
        <dbReference type="Rhea" id="RHEA:42744"/>
        <dbReference type="Rhea" id="RHEA-COMP:10217"/>
        <dbReference type="Rhea" id="RHEA-COMP:10218"/>
        <dbReference type="ChEBI" id="CHEBI:15378"/>
        <dbReference type="ChEBI" id="CHEBI:57856"/>
        <dbReference type="ChEBI" id="CHEBI:59789"/>
        <dbReference type="ChEBI" id="CHEBI:74269"/>
        <dbReference type="ChEBI" id="CHEBI:74481"/>
        <dbReference type="EC" id="2.1.1.174"/>
    </reaction>
</comment>
<comment type="subcellular location">
    <subcellularLocation>
        <location evidence="1">Cytoplasm</location>
    </subcellularLocation>
</comment>
<comment type="similarity">
    <text evidence="1">Belongs to the methyltransferase superfamily. RlmG family.</text>
</comment>
<gene>
    <name evidence="1" type="primary">rlmG</name>
    <name type="ordered locus">SNSL254_A3481</name>
</gene>
<protein>
    <recommendedName>
        <fullName evidence="1">Ribosomal RNA large subunit methyltransferase G</fullName>
        <ecNumber evidence="1">2.1.1.174</ecNumber>
    </recommendedName>
    <alternativeName>
        <fullName evidence="1">23S rRNA m2G1835 methyltransferase</fullName>
    </alternativeName>
    <alternativeName>
        <fullName evidence="1">rRNA (guanine-N(2)-)-methyltransferase RlmG</fullName>
    </alternativeName>
</protein>
<name>RLMG_SALNS</name>
<keyword id="KW-0963">Cytoplasm</keyword>
<keyword id="KW-0489">Methyltransferase</keyword>
<keyword id="KW-0698">rRNA processing</keyword>
<keyword id="KW-0949">S-adenosyl-L-methionine</keyword>
<keyword id="KW-0808">Transferase</keyword>
<sequence length="378" mass="42312">MSHVDDGFRSLTLKRFPQTDDVNPLLAWEAADEYLLQQLDETEIRGPVLILNDTFGALSCALAEHSPYSIGDSYLSELGTRENLRHNGIAESSVTFLDSTADYPQAPGVVLIKVPKTLALLEQQLRALRKVVTAQTRIIAGAKARDIHTSTLELFEKVLGPTTTTLAWKKARLINCTFSHPQLPDAPQTLSWKLEDTGWTIHNHANVFSRTGLDIGARFFMQHLPENLDGEIVDLGCGNGVIGLSLLAKNPQAKVVFVDESPMAVDSSRLNVETNLPEAFERCEFMINNALSGVEPFRFNAVFCNPPFHQKHALTDNIAWEMFHHARRCLKINGELYIVANRHLDYFHKLKKIFGNCATIATNNKFVILKAVKQGRRR</sequence>
<proteinExistence type="inferred from homology"/>
<reference key="1">
    <citation type="journal article" date="2011" name="J. Bacteriol.">
        <title>Comparative genomics of 28 Salmonella enterica isolates: evidence for CRISPR-mediated adaptive sublineage evolution.</title>
        <authorList>
            <person name="Fricke W.F."/>
            <person name="Mammel M.K."/>
            <person name="McDermott P.F."/>
            <person name="Tartera C."/>
            <person name="White D.G."/>
            <person name="Leclerc J.E."/>
            <person name="Ravel J."/>
            <person name="Cebula T.A."/>
        </authorList>
    </citation>
    <scope>NUCLEOTIDE SEQUENCE [LARGE SCALE GENOMIC DNA]</scope>
    <source>
        <strain>SL254</strain>
    </source>
</reference>